<dbReference type="EMBL" id="BX293980">
    <property type="protein sequence ID" value="CAE77466.1"/>
    <property type="molecule type" value="Genomic_DNA"/>
</dbReference>
<dbReference type="RefSeq" id="NP_975824.1">
    <property type="nucleotide sequence ID" value="NC_005364.2"/>
</dbReference>
<dbReference type="RefSeq" id="WP_011167010.1">
    <property type="nucleotide sequence ID" value="NC_005364.2"/>
</dbReference>
<dbReference type="SMR" id="Q6MSC4"/>
<dbReference type="STRING" id="272632.MSC_0854"/>
<dbReference type="KEGG" id="mmy:MSC_0854"/>
<dbReference type="PATRIC" id="fig|272632.4.peg.919"/>
<dbReference type="eggNOG" id="COG1780">
    <property type="taxonomic scope" value="Bacteria"/>
</dbReference>
<dbReference type="HOGENOM" id="CLU_114845_0_0_14"/>
<dbReference type="Proteomes" id="UP000001016">
    <property type="component" value="Chromosome"/>
</dbReference>
<dbReference type="GO" id="GO:0010181">
    <property type="term" value="F:FMN binding"/>
    <property type="evidence" value="ECO:0007669"/>
    <property type="project" value="InterPro"/>
</dbReference>
<dbReference type="GO" id="GO:0036211">
    <property type="term" value="P:protein modification process"/>
    <property type="evidence" value="ECO:0007669"/>
    <property type="project" value="InterPro"/>
</dbReference>
<dbReference type="Gene3D" id="3.40.50.360">
    <property type="match status" value="1"/>
</dbReference>
<dbReference type="HAMAP" id="MF_00128">
    <property type="entry name" value="NrdI"/>
    <property type="match status" value="1"/>
</dbReference>
<dbReference type="InterPro" id="IPR029039">
    <property type="entry name" value="Flavoprotein-like_sf"/>
</dbReference>
<dbReference type="InterPro" id="IPR020852">
    <property type="entry name" value="RNR_Ib_NrdI_bac"/>
</dbReference>
<dbReference type="InterPro" id="IPR004465">
    <property type="entry name" value="RNR_NrdI"/>
</dbReference>
<dbReference type="NCBIfam" id="TIGR00333">
    <property type="entry name" value="nrdI"/>
    <property type="match status" value="1"/>
</dbReference>
<dbReference type="PANTHER" id="PTHR37297">
    <property type="entry name" value="PROTEIN NRDI"/>
    <property type="match status" value="1"/>
</dbReference>
<dbReference type="PANTHER" id="PTHR37297:SF1">
    <property type="entry name" value="PROTEIN NRDI"/>
    <property type="match status" value="1"/>
</dbReference>
<dbReference type="Pfam" id="PF07972">
    <property type="entry name" value="Flavodoxin_NdrI"/>
    <property type="match status" value="1"/>
</dbReference>
<dbReference type="PIRSF" id="PIRSF005087">
    <property type="entry name" value="NrdI"/>
    <property type="match status" value="1"/>
</dbReference>
<dbReference type="SUPFAM" id="SSF52218">
    <property type="entry name" value="Flavoproteins"/>
    <property type="match status" value="1"/>
</dbReference>
<gene>
    <name evidence="1" type="primary">nrdI</name>
    <name type="ordered locus">MSC_0854</name>
</gene>
<name>NRDI_MYCMS</name>
<sequence>MHSNVKKVTDKDVIKPVGIPFVVYFSSISNNTHRFIQKLEIENIRIPYELDQSISVNRDYVLVTPTYSGGGEYVEGAVPKQVIKFLNNKENRSFCRGVISSGNTNFGDTFGIAGPIISKKLNVPFLYQFELLGTQHDVSQIKQILFRFWEDGNNERK</sequence>
<proteinExistence type="inferred from homology"/>
<keyword id="KW-1185">Reference proteome</keyword>
<organism>
    <name type="scientific">Mycoplasma mycoides subsp. mycoides SC (strain CCUG 32753 / NCTC 10114 / PG1)</name>
    <dbReference type="NCBI Taxonomy" id="272632"/>
    <lineage>
        <taxon>Bacteria</taxon>
        <taxon>Bacillati</taxon>
        <taxon>Mycoplasmatota</taxon>
        <taxon>Mollicutes</taxon>
        <taxon>Mycoplasmataceae</taxon>
        <taxon>Mycoplasma</taxon>
    </lineage>
</organism>
<reference key="1">
    <citation type="journal article" date="2004" name="Genome Res.">
        <title>The genome sequence of Mycoplasma mycoides subsp. mycoides SC type strain PG1T, the causative agent of contagious bovine pleuropneumonia (CBPP).</title>
        <authorList>
            <person name="Westberg J."/>
            <person name="Persson A."/>
            <person name="Holmberg A."/>
            <person name="Goesmann A."/>
            <person name="Lundeberg J."/>
            <person name="Johansson K.-E."/>
            <person name="Pettersson B."/>
            <person name="Uhlen M."/>
        </authorList>
    </citation>
    <scope>NUCLEOTIDE SEQUENCE [LARGE SCALE GENOMIC DNA]</scope>
    <source>
        <strain>CCUG 32753 / NCTC 10114 / PG1</strain>
    </source>
</reference>
<feature type="chain" id="PRO_1000016509" description="Protein NrdI">
    <location>
        <begin position="1"/>
        <end position="157"/>
    </location>
</feature>
<accession>Q6MSC4</accession>
<evidence type="ECO:0000255" key="1">
    <source>
        <dbReference type="HAMAP-Rule" id="MF_00128"/>
    </source>
</evidence>
<comment type="function">
    <text evidence="1">Probably involved in ribonucleotide reductase function.</text>
</comment>
<comment type="similarity">
    <text evidence="1">Belongs to the NrdI family.</text>
</comment>
<protein>
    <recommendedName>
        <fullName evidence="1">Protein NrdI</fullName>
    </recommendedName>
</protein>